<keyword id="KW-0002">3D-structure</keyword>
<keyword id="KW-0007">Acetylation</keyword>
<keyword id="KW-0903">Direct protein sequencing</keyword>
<keyword id="KW-0342">GTP-binding</keyword>
<keyword id="KW-0436">Ligase</keyword>
<keyword id="KW-0460">Magnesium</keyword>
<keyword id="KW-0479">Metal-binding</keyword>
<keyword id="KW-0496">Mitochondrion</keyword>
<keyword id="KW-0547">Nucleotide-binding</keyword>
<keyword id="KW-0597">Phosphoprotein</keyword>
<keyword id="KW-1185">Reference proteome</keyword>
<keyword id="KW-0809">Transit peptide</keyword>
<keyword id="KW-0816">Tricarboxylic acid cycle</keyword>
<proteinExistence type="evidence at protein level"/>
<sequence>IPAAPVAAQARKLLRDLAFRPPLLAARSQVVQLTPRRWLNLQEYQSKKLMSDNGVKVQRFFVADTANEALEAAKRLNAKEIVLKAQILAGGRGKGVFSSGLKGGVHLTKDPEVVGQLAKQMIGYNLATKQTPKEGVKVNKVMVAEALDISRETYLAILMDRSCNGPVLVGSPQGGVDIEEVAASNPELIFKEQIDIIEGIKDSQAQRMAENLGFLGPLQNQAADQIKKLYNLFLKIDATQVEVNPFGETPEGQVVCFDAKINFDDNAEFRQKDIFAMDDKSENEPIENEAAKYDLKYIGLDGNIACFVNGAGLAMATCDIIFLNGGKPANFLDLGGGVKESQVYQAFKLLTADPKVEAILVNIFGGIVNCAIIANGITKACRELELKVPLVVRLEGTNVHEAQNILTNSGLPITSAVDLEDAAKKAVASVTKK</sequence>
<comment type="function">
    <text evidence="3 7 8">GTP-specific succinyl-CoA synthetase functions in the citric acid cycle (TCA), coupling the hydrolysis of succinyl-CoA to the synthesis of GTP and thus represents the only step of substrate-level phosphorylation in the TCA. The beta subunit provides nucleotide specificity of the enzyme and binds the substrate succinate, while the binding sites for coenzyme A and phosphate are found in the alpha subunit.</text>
</comment>
<comment type="catalytic activity">
    <reaction evidence="3 7 8">
        <text>GTP + succinate + CoA = succinyl-CoA + GDP + phosphate</text>
        <dbReference type="Rhea" id="RHEA:22120"/>
        <dbReference type="ChEBI" id="CHEBI:30031"/>
        <dbReference type="ChEBI" id="CHEBI:37565"/>
        <dbReference type="ChEBI" id="CHEBI:43474"/>
        <dbReference type="ChEBI" id="CHEBI:57287"/>
        <dbReference type="ChEBI" id="CHEBI:57292"/>
        <dbReference type="ChEBI" id="CHEBI:58189"/>
        <dbReference type="EC" id="6.2.1.4"/>
    </reaction>
</comment>
<comment type="cofactor">
    <cofactor evidence="3">
        <name>Mg(2+)</name>
        <dbReference type="ChEBI" id="CHEBI:18420"/>
    </cofactor>
    <text evidence="3">Binds 1 Mg(2+) ion per subunit.</text>
</comment>
<comment type="biophysicochemical properties">
    <kinetics>
        <KM evidence="7">0.76 mM for succinate</KM>
        <Vmax evidence="7">5.99 umol/min/mg enzyme</Vmax>
    </kinetics>
</comment>
<comment type="pathway">
    <text evidence="3 11">Carbohydrate metabolism; tricarboxylic acid cycle; succinate from succinyl-CoA (ligase route): step 1/1.</text>
</comment>
<comment type="subunit">
    <text evidence="3 4 5 6 7">Heterodimer of an alpha and a beta subunit. The beta subunit determines specificity for GTP.</text>
</comment>
<comment type="interaction">
    <interactant intactId="EBI-7317595">
        <id>P53590</id>
    </interactant>
    <interactant intactId="EBI-9024832">
        <id>O19069</id>
        <label>SUCLG1</label>
    </interactant>
    <organismsDiffer>false</organismsDiffer>
    <experiments>2</experiments>
</comment>
<comment type="subcellular location">
    <subcellularLocation>
        <location evidence="3">Mitochondrion</location>
    </subcellularLocation>
</comment>
<comment type="similarity">
    <text evidence="3">Belongs to the succinate/malate CoA ligase beta subunit family. GTP-specific subunit beta subfamily.</text>
</comment>
<comment type="sequence caution" evidence="9">
    <conflict type="erroneous initiation">
        <sequence resource="EMBL-CDS" id="AAA31120"/>
    </conflict>
</comment>
<evidence type="ECO:0000250" key="1">
    <source>
        <dbReference type="UniProtKB" id="Q96I99"/>
    </source>
</evidence>
<evidence type="ECO:0000250" key="2">
    <source>
        <dbReference type="UniProtKB" id="Q9Z2I8"/>
    </source>
</evidence>
<evidence type="ECO:0000255" key="3">
    <source>
        <dbReference type="HAMAP-Rule" id="MF_03221"/>
    </source>
</evidence>
<evidence type="ECO:0000269" key="4">
    <source>
    </source>
</evidence>
<evidence type="ECO:0000269" key="5">
    <source>
    </source>
</evidence>
<evidence type="ECO:0000269" key="6">
    <source>
    </source>
</evidence>
<evidence type="ECO:0000269" key="7">
    <source>
    </source>
</evidence>
<evidence type="ECO:0000269" key="8">
    <source>
    </source>
</evidence>
<evidence type="ECO:0000305" key="9"/>
<evidence type="ECO:0000305" key="10">
    <source>
    </source>
</evidence>
<evidence type="ECO:0000305" key="11">
    <source>
    </source>
</evidence>
<evidence type="ECO:0007829" key="12">
    <source>
        <dbReference type="PDB" id="1EUC"/>
    </source>
</evidence>
<evidence type="ECO:0007829" key="13">
    <source>
        <dbReference type="PDB" id="2FPI"/>
    </source>
</evidence>
<evidence type="ECO:0007829" key="14">
    <source>
        <dbReference type="PDB" id="5CAE"/>
    </source>
</evidence>
<evidence type="ECO:0007829" key="15">
    <source>
        <dbReference type="PDB" id="6XRU"/>
    </source>
</evidence>
<evidence type="ECO:0007829" key="16">
    <source>
        <dbReference type="PDB" id="7JMK"/>
    </source>
</evidence>
<accession>P53590</accession>
<accession>Q95279</accession>
<name>SUCB2_PIG</name>
<protein>
    <recommendedName>
        <fullName evidence="3">Succinate--CoA ligase [GDP-forming] subunit beta, mitochondrial</fullName>
        <ecNumber evidence="3 7 8">6.2.1.4</ecNumber>
    </recommendedName>
    <alternativeName>
        <fullName evidence="3">GTP-specific succinyl-CoA synthetase subunit beta</fullName>
        <shortName evidence="3">G-SCS</shortName>
        <shortName evidence="3">GTPSCS</shortName>
    </alternativeName>
    <alternativeName>
        <fullName evidence="3">Succinyl-CoA synthetase beta-G chain</fullName>
        <shortName evidence="3">SCS-betaG</shortName>
    </alternativeName>
</protein>
<organism>
    <name type="scientific">Sus scrofa</name>
    <name type="common">Pig</name>
    <dbReference type="NCBI Taxonomy" id="9823"/>
    <lineage>
        <taxon>Eukaryota</taxon>
        <taxon>Metazoa</taxon>
        <taxon>Chordata</taxon>
        <taxon>Craniata</taxon>
        <taxon>Vertebrata</taxon>
        <taxon>Euteleostomi</taxon>
        <taxon>Mammalia</taxon>
        <taxon>Eutheria</taxon>
        <taxon>Laurasiatheria</taxon>
        <taxon>Artiodactyla</taxon>
        <taxon>Suina</taxon>
        <taxon>Suidae</taxon>
        <taxon>Sus</taxon>
    </lineage>
</organism>
<reference key="1">
    <citation type="journal article" date="1993" name="Protein Sci.">
        <title>Cloning, characterization, and expression of the beta subunit of pig heart succinyl-CoA synthetase.</title>
        <authorList>
            <person name="Bailey D.L."/>
            <person name="Wolodko W.T."/>
            <person name="Bridger W.A."/>
        </authorList>
    </citation>
    <scope>NUCLEOTIDE SEQUENCE [MRNA]</scope>
    <scope>PROTEIN SEQUENCE OF 23-41</scope>
    <scope>FUNCTION</scope>
    <scope>CATALYTIC ACTIVITY</scope>
    <source>
        <tissue>Heart</tissue>
    </source>
</reference>
<reference key="2">
    <citation type="journal article" date="1996" name="Mamm. Genome">
        <title>Evaluation and characterization of a porcine small intestine cDNA library: analysis of 839 clones.</title>
        <authorList>
            <person name="Winteroe A.K."/>
            <person name="Fredholm M."/>
            <person name="Davies W."/>
        </authorList>
    </citation>
    <scope>NUCLEOTIDE SEQUENCE [LARGE SCALE MRNA] OF 1-82</scope>
    <source>
        <tissue>Small intestine</tissue>
    </source>
</reference>
<reference key="3">
    <citation type="journal article" date="2000" name="J. Mol. Biol.">
        <title>Phosphorylated and dephosphorylated structures of pig heart, GTP-specific succinyl-CoA synthetase.</title>
        <authorList>
            <person name="Fraser M.E."/>
            <person name="James M.N."/>
            <person name="Bridger W.A."/>
            <person name="Wolodko W.T."/>
        </authorList>
    </citation>
    <scope>X-RAY CRYSTALLOGRAPHY (2.10 ANGSTROMS) OF 39-433 IN COMPLEX WITH SUCLG1</scope>
</reference>
<reference key="4">
    <citation type="journal article" date="2006" name="J. Biol. Chem.">
        <title>Interactions of GTP with the ATP-grasp domain of GTP-specific succinyl-CoA synthetase.</title>
        <authorList>
            <person name="Fraser M.E."/>
            <person name="Hayakawa K."/>
            <person name="Hume M.S."/>
            <person name="Ryan D.G."/>
            <person name="Brownie E.R."/>
        </authorList>
    </citation>
    <scope>X-RAY CRYSTALLOGRAPHY (2.08 ANGSTROMS) OF 40-433 IN COMPLEX WITH SUCLG1; GTP AND POTASSIUM</scope>
</reference>
<reference key="5">
    <citation type="journal article" date="2015" name="Acta Crystallogr. F Struct. Biol. Commun.">
        <title>Structure of GTP-specific succinyl-CoA synthetase in complex with CoA.</title>
        <authorList>
            <person name="Huang J."/>
            <person name="Malhi M."/>
            <person name="Deneke J."/>
            <person name="Fraser M.E."/>
        </authorList>
    </citation>
    <scope>X-RAY CRYSTALLOGRAPHY (2.10 ANGSTROMS) OF 40-433 IN COMPLEX WITH SUCLG1</scope>
</reference>
<reference key="6">
    <citation type="journal article" date="2016" name="Acta Crystallogr. D">
        <title>Structural basis for the binding of succinate to succinyl-CoA synthetase.</title>
        <authorList>
            <person name="Huang J."/>
            <person name="Fraser M.E."/>
        </authorList>
    </citation>
    <scope>X-RAY CRYSTALLOGRAPHY (2.20 ANGSTROMS) OF 40-433 IN COMPLEX WITH SUCLG1 AND SUCCINATE</scope>
    <scope>FUNCTION</scope>
    <scope>CATALYTIC ACTIVITY</scope>
    <scope>BIOPHYSICOCHEMICAL PROPERTIES</scope>
</reference>
<feature type="transit peptide" description="Mitochondrion">
    <location>
        <begin position="1" status="less than"/>
        <end position="38"/>
    </location>
</feature>
<feature type="chain" id="PRO_0000033358" description="Succinate--CoA ligase [GDP-forming] subunit beta, mitochondrial" evidence="3">
    <location>
        <begin position="39"/>
        <end position="433"/>
    </location>
</feature>
<feature type="domain" description="ATP-grasp" evidence="3">
    <location>
        <begin position="47"/>
        <end position="275"/>
    </location>
</feature>
<feature type="binding site" evidence="3 5">
    <location>
        <position position="58"/>
    </location>
    <ligand>
        <name>GTP</name>
        <dbReference type="ChEBI" id="CHEBI:37565"/>
    </ligand>
</feature>
<feature type="binding site" evidence="3 5">
    <location>
        <begin position="91"/>
        <end position="93"/>
    </location>
    <ligand>
        <name>GTP</name>
        <dbReference type="ChEBI" id="CHEBI:37565"/>
    </ligand>
</feature>
<feature type="binding site" evidence="3 5">
    <location>
        <position position="147"/>
    </location>
    <ligand>
        <name>GTP</name>
        <dbReference type="ChEBI" id="CHEBI:37565"/>
    </ligand>
</feature>
<feature type="binding site" evidence="3 10">
    <location>
        <position position="244"/>
    </location>
    <ligand>
        <name>Mg(2+)</name>
        <dbReference type="ChEBI" id="CHEBI:18420"/>
    </ligand>
</feature>
<feature type="binding site" evidence="3 10">
    <location>
        <position position="258"/>
    </location>
    <ligand>
        <name>Mg(2+)</name>
        <dbReference type="ChEBI" id="CHEBI:18420"/>
    </ligand>
</feature>
<feature type="binding site" evidence="3 7">
    <location>
        <position position="309"/>
    </location>
    <ligand>
        <name>substrate</name>
        <note>ligand shared with subunit alpha</note>
    </ligand>
</feature>
<feature type="binding site" evidence="3 7">
    <location>
        <begin position="366"/>
        <end position="368"/>
    </location>
    <ligand>
        <name>substrate</name>
        <note>ligand shared with subunit alpha</note>
    </ligand>
</feature>
<feature type="site" description="Important for substrate specificity" evidence="3">
    <location>
        <position position="80"/>
    </location>
</feature>
<feature type="site" description="Important for substrate specificity" evidence="3">
    <location>
        <position position="148"/>
    </location>
</feature>
<feature type="modified residue" description="N6-acetyllysine" evidence="2">
    <location>
        <position position="74"/>
    </location>
</feature>
<feature type="modified residue" description="N6-succinyllysine" evidence="2">
    <location>
        <position position="79"/>
    </location>
</feature>
<feature type="modified residue" description="N6-acetyllysine" evidence="2">
    <location>
        <position position="133"/>
    </location>
</feature>
<feature type="modified residue" description="N6-acetyllysine" evidence="2">
    <location>
        <position position="140"/>
    </location>
</feature>
<feature type="modified residue" description="Phosphoserine" evidence="2">
    <location>
        <position position="162"/>
    </location>
</feature>
<feature type="modified residue" description="N6-acetyllysine" evidence="2">
    <location>
        <position position="201"/>
    </location>
</feature>
<feature type="modified residue" description="N6-acetyllysine" evidence="1">
    <location>
        <position position="228"/>
    </location>
</feature>
<feature type="modified residue" description="N6-acetyllysine" evidence="2">
    <location>
        <position position="272"/>
    </location>
</feature>
<feature type="modified residue" description="N6-acetyllysine" evidence="1">
    <location>
        <position position="292"/>
    </location>
</feature>
<feature type="modified residue" description="N6-succinyllysine" evidence="2">
    <location>
        <position position="339"/>
    </location>
</feature>
<feature type="modified residue" description="N6-acetyllysine" evidence="2">
    <location>
        <position position="348"/>
    </location>
</feature>
<feature type="modified residue" description="N6-acetyllysine" evidence="2">
    <location>
        <position position="387"/>
    </location>
</feature>
<feature type="modified residue" description="N6-acetyllysine" evidence="2">
    <location>
        <position position="424"/>
    </location>
</feature>
<feature type="non-terminal residue">
    <location>
        <position position="1"/>
    </location>
</feature>
<feature type="helix" evidence="15">
    <location>
        <begin position="43"/>
        <end position="51"/>
    </location>
</feature>
<feature type="turn" evidence="15">
    <location>
        <begin position="52"/>
        <end position="54"/>
    </location>
</feature>
<feature type="strand" evidence="15">
    <location>
        <begin position="60"/>
        <end position="65"/>
    </location>
</feature>
<feature type="helix" evidence="15">
    <location>
        <begin position="66"/>
        <end position="76"/>
    </location>
</feature>
<feature type="strand" evidence="15">
    <location>
        <begin position="79"/>
        <end position="85"/>
    </location>
</feature>
<feature type="strand" evidence="15">
    <location>
        <begin position="88"/>
        <end position="90"/>
    </location>
</feature>
<feature type="helix" evidence="15">
    <location>
        <begin position="92"/>
        <end position="94"/>
    </location>
</feature>
<feature type="strand" evidence="16">
    <location>
        <begin position="96"/>
        <end position="100"/>
    </location>
</feature>
<feature type="strand" evidence="15">
    <location>
        <begin position="104"/>
        <end position="109"/>
    </location>
</feature>
<feature type="helix" evidence="15">
    <location>
        <begin position="111"/>
        <end position="119"/>
    </location>
</feature>
<feature type="turn" evidence="15">
    <location>
        <begin position="120"/>
        <end position="123"/>
    </location>
</feature>
<feature type="strand" evidence="15">
    <location>
        <begin position="124"/>
        <end position="127"/>
    </location>
</feature>
<feature type="strand" evidence="16">
    <location>
        <begin position="129"/>
        <end position="131"/>
    </location>
</feature>
<feature type="strand" evidence="15">
    <location>
        <begin position="141"/>
        <end position="145"/>
    </location>
</feature>
<feature type="strand" evidence="15">
    <location>
        <begin position="150"/>
        <end position="159"/>
    </location>
</feature>
<feature type="strand" evidence="15">
    <location>
        <begin position="161"/>
        <end position="172"/>
    </location>
</feature>
<feature type="helix" evidence="15">
    <location>
        <begin position="178"/>
        <end position="184"/>
    </location>
</feature>
<feature type="helix" evidence="15">
    <location>
        <begin position="186"/>
        <end position="188"/>
    </location>
</feature>
<feature type="strand" evidence="15">
    <location>
        <begin position="190"/>
        <end position="193"/>
    </location>
</feature>
<feature type="turn" evidence="15">
    <location>
        <begin position="196"/>
        <end position="198"/>
    </location>
</feature>
<feature type="helix" evidence="15">
    <location>
        <begin position="202"/>
        <end position="211"/>
    </location>
</feature>
<feature type="helix" evidence="15">
    <location>
        <begin position="216"/>
        <end position="235"/>
    </location>
</feature>
<feature type="strand" evidence="15">
    <location>
        <begin position="238"/>
        <end position="248"/>
    </location>
</feature>
<feature type="turn" evidence="12">
    <location>
        <begin position="250"/>
        <end position="252"/>
    </location>
</feature>
<feature type="strand" evidence="15">
    <location>
        <begin position="254"/>
        <end position="256"/>
    </location>
</feature>
<feature type="strand" evidence="15">
    <location>
        <begin position="259"/>
        <end position="263"/>
    </location>
</feature>
<feature type="helix" evidence="15">
    <location>
        <begin position="265"/>
        <end position="270"/>
    </location>
</feature>
<feature type="helix" evidence="15">
    <location>
        <begin position="272"/>
        <end position="275"/>
    </location>
</feature>
<feature type="strand" evidence="13">
    <location>
        <begin position="281"/>
        <end position="283"/>
    </location>
</feature>
<feature type="helix" evidence="15">
    <location>
        <begin position="285"/>
        <end position="292"/>
    </location>
</feature>
<feature type="strand" evidence="15">
    <location>
        <begin position="296"/>
        <end position="299"/>
    </location>
</feature>
<feature type="strand" evidence="15">
    <location>
        <begin position="301"/>
        <end position="310"/>
    </location>
</feature>
<feature type="helix" evidence="15">
    <location>
        <begin position="311"/>
        <end position="323"/>
    </location>
</feature>
<feature type="strand" evidence="15">
    <location>
        <begin position="330"/>
        <end position="333"/>
    </location>
</feature>
<feature type="helix" evidence="15">
    <location>
        <begin position="340"/>
        <end position="352"/>
    </location>
</feature>
<feature type="strand" evidence="15">
    <location>
        <begin position="357"/>
        <end position="368"/>
    </location>
</feature>
<feature type="helix" evidence="15">
    <location>
        <begin position="370"/>
        <end position="382"/>
    </location>
</feature>
<feature type="turn" evidence="14">
    <location>
        <begin position="383"/>
        <end position="385"/>
    </location>
</feature>
<feature type="strand" evidence="15">
    <location>
        <begin position="390"/>
        <end position="396"/>
    </location>
</feature>
<feature type="helix" evidence="15">
    <location>
        <begin position="399"/>
        <end position="408"/>
    </location>
</feature>
<feature type="strand" evidence="12">
    <location>
        <begin position="411"/>
        <end position="415"/>
    </location>
</feature>
<feature type="helix" evidence="15">
    <location>
        <begin position="419"/>
        <end position="428"/>
    </location>
</feature>
<gene>
    <name evidence="3" type="primary">SUCLG2</name>
</gene>
<dbReference type="EC" id="6.2.1.4" evidence="3 7 8"/>
<dbReference type="EMBL" id="L06944">
    <property type="protein sequence ID" value="AAA31120.1"/>
    <property type="status" value="ALT_INIT"/>
    <property type="molecule type" value="mRNA"/>
</dbReference>
<dbReference type="EMBL" id="Z81187">
    <property type="protein sequence ID" value="CAB03559.1"/>
    <property type="molecule type" value="mRNA"/>
</dbReference>
<dbReference type="PIR" id="A44529">
    <property type="entry name" value="A44529"/>
</dbReference>
<dbReference type="PDB" id="1EUC">
    <property type="method" value="X-ray"/>
    <property type="resolution" value="2.10 A"/>
    <property type="chains" value="B=39-433"/>
</dbReference>
<dbReference type="PDB" id="1EUD">
    <property type="method" value="X-ray"/>
    <property type="resolution" value="2.10 A"/>
    <property type="chains" value="B=39-433"/>
</dbReference>
<dbReference type="PDB" id="2FP4">
    <property type="method" value="X-ray"/>
    <property type="resolution" value="2.08 A"/>
    <property type="chains" value="B=40-433"/>
</dbReference>
<dbReference type="PDB" id="2FPG">
    <property type="method" value="X-ray"/>
    <property type="resolution" value="2.96 A"/>
    <property type="chains" value="B=40-433"/>
</dbReference>
<dbReference type="PDB" id="2FPI">
    <property type="method" value="X-ray"/>
    <property type="resolution" value="2.70 A"/>
    <property type="chains" value="B=40-433"/>
</dbReference>
<dbReference type="PDB" id="2FPP">
    <property type="method" value="X-ray"/>
    <property type="resolution" value="2.35 A"/>
    <property type="chains" value="B=40-433"/>
</dbReference>
<dbReference type="PDB" id="4XX0">
    <property type="method" value="X-ray"/>
    <property type="resolution" value="2.10 A"/>
    <property type="chains" value="B=40-433"/>
</dbReference>
<dbReference type="PDB" id="5CAE">
    <property type="method" value="X-ray"/>
    <property type="resolution" value="2.20 A"/>
    <property type="chains" value="B=40-433"/>
</dbReference>
<dbReference type="PDB" id="6XRU">
    <property type="method" value="X-ray"/>
    <property type="resolution" value="1.40 A"/>
    <property type="chains" value="B=39-433"/>
</dbReference>
<dbReference type="PDB" id="7JFP">
    <property type="method" value="X-ray"/>
    <property type="resolution" value="2.55 A"/>
    <property type="chains" value="B=39-433"/>
</dbReference>
<dbReference type="PDB" id="7JJ0">
    <property type="method" value="X-ray"/>
    <property type="resolution" value="2.25 A"/>
    <property type="chains" value="B/D=39-433"/>
</dbReference>
<dbReference type="PDB" id="7JKR">
    <property type="method" value="X-ray"/>
    <property type="resolution" value="2.64 A"/>
    <property type="chains" value="B=39-433"/>
</dbReference>
<dbReference type="PDB" id="7JMK">
    <property type="method" value="X-ray"/>
    <property type="resolution" value="2.50 A"/>
    <property type="chains" value="B/D=39-433"/>
</dbReference>
<dbReference type="PDBsum" id="1EUC"/>
<dbReference type="PDBsum" id="1EUD"/>
<dbReference type="PDBsum" id="2FP4"/>
<dbReference type="PDBsum" id="2FPG"/>
<dbReference type="PDBsum" id="2FPI"/>
<dbReference type="PDBsum" id="2FPP"/>
<dbReference type="PDBsum" id="4XX0"/>
<dbReference type="PDBsum" id="5CAE"/>
<dbReference type="PDBsum" id="6XRU"/>
<dbReference type="PDBsum" id="7JFP"/>
<dbReference type="PDBsum" id="7JJ0"/>
<dbReference type="PDBsum" id="7JKR"/>
<dbReference type="PDBsum" id="7JMK"/>
<dbReference type="SMR" id="P53590"/>
<dbReference type="CORUM" id="P53590"/>
<dbReference type="FunCoup" id="P53590">
    <property type="interactions" value="813"/>
</dbReference>
<dbReference type="IntAct" id="P53590">
    <property type="interactions" value="1"/>
</dbReference>
<dbReference type="MINT" id="P53590"/>
<dbReference type="STRING" id="9823.ENSSSCP00000036064"/>
<dbReference type="PaxDb" id="9823-ENSSSCP00000012257"/>
<dbReference type="PeptideAtlas" id="P53590"/>
<dbReference type="eggNOG" id="KOG1447">
    <property type="taxonomic scope" value="Eukaryota"/>
</dbReference>
<dbReference type="InParanoid" id="P53590"/>
<dbReference type="BRENDA" id="6.2.1.4">
    <property type="organism ID" value="6170"/>
</dbReference>
<dbReference type="SABIO-RK" id="P53590"/>
<dbReference type="UniPathway" id="UPA00223">
    <property type="reaction ID" value="UER00999"/>
</dbReference>
<dbReference type="EvolutionaryTrace" id="P53590"/>
<dbReference type="Proteomes" id="UP000008227">
    <property type="component" value="Unplaced"/>
</dbReference>
<dbReference type="Proteomes" id="UP000314985">
    <property type="component" value="Unplaced"/>
</dbReference>
<dbReference type="Proteomes" id="UP000694570">
    <property type="component" value="Unplaced"/>
</dbReference>
<dbReference type="Proteomes" id="UP000694571">
    <property type="component" value="Unplaced"/>
</dbReference>
<dbReference type="Proteomes" id="UP000694720">
    <property type="component" value="Unplaced"/>
</dbReference>
<dbReference type="Proteomes" id="UP000694722">
    <property type="component" value="Unplaced"/>
</dbReference>
<dbReference type="Proteomes" id="UP000694723">
    <property type="component" value="Unplaced"/>
</dbReference>
<dbReference type="Proteomes" id="UP000694724">
    <property type="component" value="Unplaced"/>
</dbReference>
<dbReference type="Proteomes" id="UP000694725">
    <property type="component" value="Unplaced"/>
</dbReference>
<dbReference type="Proteomes" id="UP000694726">
    <property type="component" value="Unplaced"/>
</dbReference>
<dbReference type="Proteomes" id="UP000694727">
    <property type="component" value="Unplaced"/>
</dbReference>
<dbReference type="Proteomes" id="UP000694728">
    <property type="component" value="Unplaced"/>
</dbReference>
<dbReference type="GO" id="GO:0005739">
    <property type="term" value="C:mitochondrion"/>
    <property type="evidence" value="ECO:0000318"/>
    <property type="project" value="GO_Central"/>
</dbReference>
<dbReference type="GO" id="GO:0042709">
    <property type="term" value="C:succinate-CoA ligase complex"/>
    <property type="evidence" value="ECO:0000318"/>
    <property type="project" value="GO_Central"/>
</dbReference>
<dbReference type="GO" id="GO:0005524">
    <property type="term" value="F:ATP binding"/>
    <property type="evidence" value="ECO:0007669"/>
    <property type="project" value="InterPro"/>
</dbReference>
<dbReference type="GO" id="GO:0005525">
    <property type="term" value="F:GTP binding"/>
    <property type="evidence" value="ECO:0007669"/>
    <property type="project" value="UniProtKB-KW"/>
</dbReference>
<dbReference type="GO" id="GO:0046872">
    <property type="term" value="F:metal ion binding"/>
    <property type="evidence" value="ECO:0007669"/>
    <property type="project" value="UniProtKB-KW"/>
</dbReference>
<dbReference type="GO" id="GO:0004776">
    <property type="term" value="F:succinate-CoA ligase (GDP-forming) activity"/>
    <property type="evidence" value="ECO:0000318"/>
    <property type="project" value="GO_Central"/>
</dbReference>
<dbReference type="GO" id="GO:0006104">
    <property type="term" value="P:succinyl-CoA metabolic process"/>
    <property type="evidence" value="ECO:0000318"/>
    <property type="project" value="GO_Central"/>
</dbReference>
<dbReference type="GO" id="GO:0006099">
    <property type="term" value="P:tricarboxylic acid cycle"/>
    <property type="evidence" value="ECO:0000318"/>
    <property type="project" value="GO_Central"/>
</dbReference>
<dbReference type="FunFam" id="3.30.470.20:FF:000002">
    <property type="entry name" value="Succinate--CoA ligase [ADP-forming] subunit beta"/>
    <property type="match status" value="1"/>
</dbReference>
<dbReference type="FunFam" id="3.40.50.261:FF:000001">
    <property type="entry name" value="Succinate--CoA ligase [ADP-forming] subunit beta"/>
    <property type="match status" value="1"/>
</dbReference>
<dbReference type="FunFam" id="3.30.1490.20:FF:000004">
    <property type="entry name" value="Succinate--CoA ligase [ADP-forming] subunit beta, mitochondrial"/>
    <property type="match status" value="1"/>
</dbReference>
<dbReference type="Gene3D" id="3.30.1490.20">
    <property type="entry name" value="ATP-grasp fold, A domain"/>
    <property type="match status" value="1"/>
</dbReference>
<dbReference type="Gene3D" id="3.30.470.20">
    <property type="entry name" value="ATP-grasp fold, B domain"/>
    <property type="match status" value="1"/>
</dbReference>
<dbReference type="Gene3D" id="3.40.50.261">
    <property type="entry name" value="Succinyl-CoA synthetase domains"/>
    <property type="match status" value="1"/>
</dbReference>
<dbReference type="HAMAP" id="MF_00558">
    <property type="entry name" value="Succ_CoA_beta"/>
    <property type="match status" value="1"/>
</dbReference>
<dbReference type="HAMAP" id="MF_03221">
    <property type="entry name" value="Succ_CoA_betaG_euk"/>
    <property type="match status" value="1"/>
</dbReference>
<dbReference type="InterPro" id="IPR013650">
    <property type="entry name" value="ATP-grasp_succ-CoA_synth-type"/>
</dbReference>
<dbReference type="InterPro" id="IPR013815">
    <property type="entry name" value="ATP_grasp_subdomain_1"/>
</dbReference>
<dbReference type="InterPro" id="IPR017866">
    <property type="entry name" value="Succ-CoA_synthase_bsu_CS"/>
</dbReference>
<dbReference type="InterPro" id="IPR005811">
    <property type="entry name" value="SUCC_ACL_C"/>
</dbReference>
<dbReference type="InterPro" id="IPR034722">
    <property type="entry name" value="Succ_CoA_betaG_euk"/>
</dbReference>
<dbReference type="InterPro" id="IPR005809">
    <property type="entry name" value="Succ_CoA_ligase-like_bsu"/>
</dbReference>
<dbReference type="InterPro" id="IPR016102">
    <property type="entry name" value="Succinyl-CoA_synth-like"/>
</dbReference>
<dbReference type="NCBIfam" id="NF001913">
    <property type="entry name" value="PRK00696.1"/>
    <property type="match status" value="1"/>
</dbReference>
<dbReference type="NCBIfam" id="TIGR01016">
    <property type="entry name" value="sucCoAbeta"/>
    <property type="match status" value="1"/>
</dbReference>
<dbReference type="PANTHER" id="PTHR11815:SF10">
    <property type="entry name" value="SUCCINATE--COA LIGASE [GDP-FORMING] SUBUNIT BETA, MITOCHONDRIAL"/>
    <property type="match status" value="1"/>
</dbReference>
<dbReference type="PANTHER" id="PTHR11815">
    <property type="entry name" value="SUCCINYL-COA SYNTHETASE BETA CHAIN"/>
    <property type="match status" value="1"/>
</dbReference>
<dbReference type="Pfam" id="PF08442">
    <property type="entry name" value="ATP-grasp_2"/>
    <property type="match status" value="1"/>
</dbReference>
<dbReference type="Pfam" id="PF00549">
    <property type="entry name" value="Ligase_CoA"/>
    <property type="match status" value="1"/>
</dbReference>
<dbReference type="PIRSF" id="PIRSF001554">
    <property type="entry name" value="SucCS_beta"/>
    <property type="match status" value="1"/>
</dbReference>
<dbReference type="SUPFAM" id="SSF56059">
    <property type="entry name" value="Glutathione synthetase ATP-binding domain-like"/>
    <property type="match status" value="1"/>
</dbReference>
<dbReference type="SUPFAM" id="SSF52210">
    <property type="entry name" value="Succinyl-CoA synthetase domains"/>
    <property type="match status" value="1"/>
</dbReference>
<dbReference type="PROSITE" id="PS01217">
    <property type="entry name" value="SUCCINYL_COA_LIG_3"/>
    <property type="match status" value="1"/>
</dbReference>